<proteinExistence type="inferred from homology"/>
<keyword id="KW-0450">Lipoyl</keyword>
<sequence length="126" mass="14081">MAVPNELKYSKEHEWVKVEGNVATIGITEYAQSELGDIVFVELPETDDEINEGDTFGSVESVKTVSELYAPISGKVVEVNEELEDSPEFVNESPYEKAWMVKVEISDESQLEALLTAEKYSEMIGE</sequence>
<evidence type="ECO:0000255" key="1">
    <source>
        <dbReference type="HAMAP-Rule" id="MF_00272"/>
    </source>
</evidence>
<evidence type="ECO:0000255" key="2">
    <source>
        <dbReference type="PROSITE-ProRule" id="PRU01066"/>
    </source>
</evidence>
<comment type="function">
    <text evidence="1">The glycine cleavage system catalyzes the degradation of glycine. The H protein shuttles the methylamine group of glycine from the P protein to the T protein.</text>
</comment>
<comment type="function">
    <text evidence="1">Is also involved in protein lipoylation via its role as an octanoyl/lipoyl carrier protein intermediate.</text>
</comment>
<comment type="cofactor">
    <cofactor evidence="1">
        <name>(R)-lipoate</name>
        <dbReference type="ChEBI" id="CHEBI:83088"/>
    </cofactor>
    <text evidence="1">Binds 1 lipoyl cofactor covalently.</text>
</comment>
<comment type="subunit">
    <text evidence="1">The glycine cleavage system is composed of four proteins: P, T, L and H.</text>
</comment>
<comment type="similarity">
    <text evidence="1">Belongs to the GcvH family.</text>
</comment>
<protein>
    <recommendedName>
        <fullName evidence="1">Glycine cleavage system H protein</fullName>
    </recommendedName>
    <alternativeName>
        <fullName evidence="1">Octanoyl/lipoyl carrier protein</fullName>
    </alternativeName>
</protein>
<reference key="1">
    <citation type="submission" date="2007-06" db="EMBL/GenBank/DDBJ databases">
        <title>Complete sequence of chromosome of Staphylococcus aureus subsp. aureus JH1.</title>
        <authorList>
            <consortium name="US DOE Joint Genome Institute"/>
            <person name="Copeland A."/>
            <person name="Lucas S."/>
            <person name="Lapidus A."/>
            <person name="Barry K."/>
            <person name="Detter J.C."/>
            <person name="Glavina del Rio T."/>
            <person name="Hammon N."/>
            <person name="Israni S."/>
            <person name="Dalin E."/>
            <person name="Tice H."/>
            <person name="Pitluck S."/>
            <person name="Chain P."/>
            <person name="Malfatti S."/>
            <person name="Shin M."/>
            <person name="Vergez L."/>
            <person name="Schmutz J."/>
            <person name="Larimer F."/>
            <person name="Land M."/>
            <person name="Hauser L."/>
            <person name="Kyrpides N."/>
            <person name="Ivanova N."/>
            <person name="Tomasz A."/>
            <person name="Richardson P."/>
        </authorList>
    </citation>
    <scope>NUCLEOTIDE SEQUENCE [LARGE SCALE GENOMIC DNA]</scope>
    <source>
        <strain>JH1</strain>
    </source>
</reference>
<organism>
    <name type="scientific">Staphylococcus aureus (strain JH1)</name>
    <dbReference type="NCBI Taxonomy" id="359787"/>
    <lineage>
        <taxon>Bacteria</taxon>
        <taxon>Bacillati</taxon>
        <taxon>Bacillota</taxon>
        <taxon>Bacilli</taxon>
        <taxon>Bacillales</taxon>
        <taxon>Staphylococcaceae</taxon>
        <taxon>Staphylococcus</taxon>
    </lineage>
</organism>
<name>GCSH_STAA2</name>
<gene>
    <name evidence="1" type="primary">gcvH</name>
    <name type="ordered locus">SaurJH1_0849</name>
</gene>
<accession>A6TZT7</accession>
<dbReference type="EMBL" id="CP000736">
    <property type="protein sequence ID" value="ABR51705.1"/>
    <property type="molecule type" value="Genomic_DNA"/>
</dbReference>
<dbReference type="SMR" id="A6TZT7"/>
<dbReference type="KEGG" id="sah:SaurJH1_0849"/>
<dbReference type="HOGENOM" id="CLU_097408_2_0_9"/>
<dbReference type="GO" id="GO:0005829">
    <property type="term" value="C:cytosol"/>
    <property type="evidence" value="ECO:0007669"/>
    <property type="project" value="TreeGrafter"/>
</dbReference>
<dbReference type="GO" id="GO:0005960">
    <property type="term" value="C:glycine cleavage complex"/>
    <property type="evidence" value="ECO:0007669"/>
    <property type="project" value="InterPro"/>
</dbReference>
<dbReference type="GO" id="GO:0019464">
    <property type="term" value="P:glycine decarboxylation via glycine cleavage system"/>
    <property type="evidence" value="ECO:0007669"/>
    <property type="project" value="UniProtKB-UniRule"/>
</dbReference>
<dbReference type="CDD" id="cd06848">
    <property type="entry name" value="GCS_H"/>
    <property type="match status" value="1"/>
</dbReference>
<dbReference type="Gene3D" id="2.40.50.100">
    <property type="match status" value="1"/>
</dbReference>
<dbReference type="HAMAP" id="MF_00272">
    <property type="entry name" value="GcvH"/>
    <property type="match status" value="1"/>
</dbReference>
<dbReference type="InterPro" id="IPR003016">
    <property type="entry name" value="2-oxoA_DH_lipoyl-BS"/>
</dbReference>
<dbReference type="InterPro" id="IPR000089">
    <property type="entry name" value="Biotin_lipoyl"/>
</dbReference>
<dbReference type="InterPro" id="IPR002930">
    <property type="entry name" value="GCV_H"/>
</dbReference>
<dbReference type="InterPro" id="IPR033753">
    <property type="entry name" value="GCV_H/Fam206"/>
</dbReference>
<dbReference type="InterPro" id="IPR017453">
    <property type="entry name" value="GCV_H_sub"/>
</dbReference>
<dbReference type="InterPro" id="IPR011053">
    <property type="entry name" value="Single_hybrid_motif"/>
</dbReference>
<dbReference type="NCBIfam" id="TIGR00527">
    <property type="entry name" value="gcvH"/>
    <property type="match status" value="1"/>
</dbReference>
<dbReference type="NCBIfam" id="NF002270">
    <property type="entry name" value="PRK01202.1"/>
    <property type="match status" value="1"/>
</dbReference>
<dbReference type="PANTHER" id="PTHR11715">
    <property type="entry name" value="GLYCINE CLEAVAGE SYSTEM H PROTEIN"/>
    <property type="match status" value="1"/>
</dbReference>
<dbReference type="PANTHER" id="PTHR11715:SF3">
    <property type="entry name" value="GLYCINE CLEAVAGE SYSTEM H PROTEIN-RELATED"/>
    <property type="match status" value="1"/>
</dbReference>
<dbReference type="Pfam" id="PF01597">
    <property type="entry name" value="GCV_H"/>
    <property type="match status" value="1"/>
</dbReference>
<dbReference type="SUPFAM" id="SSF51230">
    <property type="entry name" value="Single hybrid motif"/>
    <property type="match status" value="1"/>
</dbReference>
<dbReference type="PROSITE" id="PS50968">
    <property type="entry name" value="BIOTINYL_LIPOYL"/>
    <property type="match status" value="1"/>
</dbReference>
<dbReference type="PROSITE" id="PS00189">
    <property type="entry name" value="LIPOYL"/>
    <property type="match status" value="1"/>
</dbReference>
<feature type="chain" id="PRO_1000078743" description="Glycine cleavage system H protein">
    <location>
        <begin position="1"/>
        <end position="126"/>
    </location>
</feature>
<feature type="domain" description="Lipoyl-binding" evidence="2">
    <location>
        <begin position="22"/>
        <end position="104"/>
    </location>
</feature>
<feature type="modified residue" description="N6-lipoyllysine" evidence="1">
    <location>
        <position position="63"/>
    </location>
</feature>